<reference key="1">
    <citation type="journal article" date="2004" name="Nucleic Acids Res.">
        <title>The genome sequence of Bacillus cereus ATCC 10987 reveals metabolic adaptations and a large plasmid related to Bacillus anthracis pXO1.</title>
        <authorList>
            <person name="Rasko D.A."/>
            <person name="Ravel J."/>
            <person name="Oekstad O.A."/>
            <person name="Helgason E."/>
            <person name="Cer R.Z."/>
            <person name="Jiang L."/>
            <person name="Shores K.A."/>
            <person name="Fouts D.E."/>
            <person name="Tourasse N.J."/>
            <person name="Angiuoli S.V."/>
            <person name="Kolonay J.F."/>
            <person name="Nelson W.C."/>
            <person name="Kolstoe A.-B."/>
            <person name="Fraser C.M."/>
            <person name="Read T.D."/>
        </authorList>
    </citation>
    <scope>NUCLEOTIDE SEQUENCE [LARGE SCALE GENOMIC DNA]</scope>
    <source>
        <strain>ATCC 10987 / NRS 248</strain>
    </source>
</reference>
<keyword id="KW-0131">Cell cycle</keyword>
<keyword id="KW-0132">Cell division</keyword>
<keyword id="KW-1003">Cell membrane</keyword>
<keyword id="KW-0133">Cell shape</keyword>
<keyword id="KW-0961">Cell wall biogenesis/degradation</keyword>
<keyword id="KW-0460">Magnesium</keyword>
<keyword id="KW-0472">Membrane</keyword>
<keyword id="KW-0479">Metal-binding</keyword>
<keyword id="KW-0573">Peptidoglycan synthesis</keyword>
<keyword id="KW-0808">Transferase</keyword>
<keyword id="KW-0812">Transmembrane</keyword>
<keyword id="KW-1133">Transmembrane helix</keyword>
<evidence type="ECO:0000255" key="1">
    <source>
        <dbReference type="HAMAP-Rule" id="MF_00038"/>
    </source>
</evidence>
<sequence>MLEQGLLVTAGVAFLISVALSPLFIPFLRKLKFGQSIRDEGPKSHQKKSGTPTMGGIVIYVSMMVTSLIMAIKFNHLGAEVSLLLLVTFGYGLIGFLDDYIKVVKKRNLGLTSKQKLVGQLVIAIAFFLIGKGQAFHTYIMIPGTDVKFELGWAYFVLVLFMLIGGSNAVNLTDGLDGLLSGTAAIAFGAFSIIAVAQEQFGVAIFCMAVVGAVLGFLVFNANPAKVFMGDTGSLALGGAIAAVAILLKQELLLVIIGGVFVMETLSVIIQVISFKTTGKRVFKMSPLHHHYELCGWSEWRVVVTFWSVGFLLAVLGIYIGVWM</sequence>
<dbReference type="EC" id="2.7.8.13" evidence="1"/>
<dbReference type="EMBL" id="AE017194">
    <property type="protein sequence ID" value="AAS42862.1"/>
    <property type="molecule type" value="Genomic_DNA"/>
</dbReference>
<dbReference type="SMR" id="Q732F5"/>
<dbReference type="KEGG" id="bca:BCE_3959"/>
<dbReference type="HOGENOM" id="CLU_023982_0_1_9"/>
<dbReference type="UniPathway" id="UPA00219"/>
<dbReference type="Proteomes" id="UP000002527">
    <property type="component" value="Chromosome"/>
</dbReference>
<dbReference type="GO" id="GO:0005886">
    <property type="term" value="C:plasma membrane"/>
    <property type="evidence" value="ECO:0007669"/>
    <property type="project" value="UniProtKB-SubCell"/>
</dbReference>
<dbReference type="GO" id="GO:0046872">
    <property type="term" value="F:metal ion binding"/>
    <property type="evidence" value="ECO:0007669"/>
    <property type="project" value="UniProtKB-KW"/>
</dbReference>
<dbReference type="GO" id="GO:0008963">
    <property type="term" value="F:phospho-N-acetylmuramoyl-pentapeptide-transferase activity"/>
    <property type="evidence" value="ECO:0007669"/>
    <property type="project" value="UniProtKB-UniRule"/>
</dbReference>
<dbReference type="GO" id="GO:0051992">
    <property type="term" value="F:UDP-N-acetylmuramoyl-L-alanyl-D-glutamyl-meso-2,6-diaminopimelyl-D-alanyl-D-alanine:undecaprenyl-phosphate transferase activity"/>
    <property type="evidence" value="ECO:0007669"/>
    <property type="project" value="RHEA"/>
</dbReference>
<dbReference type="GO" id="GO:0051301">
    <property type="term" value="P:cell division"/>
    <property type="evidence" value="ECO:0007669"/>
    <property type="project" value="UniProtKB-KW"/>
</dbReference>
<dbReference type="GO" id="GO:0071555">
    <property type="term" value="P:cell wall organization"/>
    <property type="evidence" value="ECO:0007669"/>
    <property type="project" value="UniProtKB-KW"/>
</dbReference>
<dbReference type="GO" id="GO:0009252">
    <property type="term" value="P:peptidoglycan biosynthetic process"/>
    <property type="evidence" value="ECO:0007669"/>
    <property type="project" value="UniProtKB-UniRule"/>
</dbReference>
<dbReference type="GO" id="GO:0008360">
    <property type="term" value="P:regulation of cell shape"/>
    <property type="evidence" value="ECO:0007669"/>
    <property type="project" value="UniProtKB-KW"/>
</dbReference>
<dbReference type="CDD" id="cd06852">
    <property type="entry name" value="GT_MraY"/>
    <property type="match status" value="1"/>
</dbReference>
<dbReference type="HAMAP" id="MF_00038">
    <property type="entry name" value="MraY"/>
    <property type="match status" value="1"/>
</dbReference>
<dbReference type="InterPro" id="IPR000715">
    <property type="entry name" value="Glycosyl_transferase_4"/>
</dbReference>
<dbReference type="InterPro" id="IPR003524">
    <property type="entry name" value="PNAcMuramoyl-5peptid_Trfase"/>
</dbReference>
<dbReference type="InterPro" id="IPR018480">
    <property type="entry name" value="PNAcMuramoyl-5peptid_Trfase_CS"/>
</dbReference>
<dbReference type="NCBIfam" id="TIGR00445">
    <property type="entry name" value="mraY"/>
    <property type="match status" value="1"/>
</dbReference>
<dbReference type="PANTHER" id="PTHR22926">
    <property type="entry name" value="PHOSPHO-N-ACETYLMURAMOYL-PENTAPEPTIDE-TRANSFERASE"/>
    <property type="match status" value="1"/>
</dbReference>
<dbReference type="PANTHER" id="PTHR22926:SF5">
    <property type="entry name" value="PHOSPHO-N-ACETYLMURAMOYL-PENTAPEPTIDE-TRANSFERASE HOMOLOG"/>
    <property type="match status" value="1"/>
</dbReference>
<dbReference type="Pfam" id="PF00953">
    <property type="entry name" value="Glycos_transf_4"/>
    <property type="match status" value="1"/>
</dbReference>
<dbReference type="Pfam" id="PF10555">
    <property type="entry name" value="MraY_sig1"/>
    <property type="match status" value="1"/>
</dbReference>
<dbReference type="PROSITE" id="PS01348">
    <property type="entry name" value="MRAY_2"/>
    <property type="match status" value="1"/>
</dbReference>
<proteinExistence type="inferred from homology"/>
<feature type="chain" id="PRO_0000108775" description="Phospho-N-acetylmuramoyl-pentapeptide-transferase">
    <location>
        <begin position="1"/>
        <end position="324"/>
    </location>
</feature>
<feature type="transmembrane region" description="Helical" evidence="1">
    <location>
        <begin position="5"/>
        <end position="25"/>
    </location>
</feature>
<feature type="transmembrane region" description="Helical" evidence="1">
    <location>
        <begin position="52"/>
        <end position="72"/>
    </location>
</feature>
<feature type="transmembrane region" description="Helical" evidence="1">
    <location>
        <begin position="77"/>
        <end position="97"/>
    </location>
</feature>
<feature type="transmembrane region" description="Helical" evidence="1">
    <location>
        <begin position="122"/>
        <end position="142"/>
    </location>
</feature>
<feature type="transmembrane region" description="Helical" evidence="1">
    <location>
        <begin position="149"/>
        <end position="169"/>
    </location>
</feature>
<feature type="transmembrane region" description="Helical" evidence="1">
    <location>
        <begin position="176"/>
        <end position="196"/>
    </location>
</feature>
<feature type="transmembrane region" description="Helical" evidence="1">
    <location>
        <begin position="201"/>
        <end position="221"/>
    </location>
</feature>
<feature type="transmembrane region" description="Helical" evidence="1">
    <location>
        <begin position="227"/>
        <end position="247"/>
    </location>
</feature>
<feature type="transmembrane region" description="Helical" evidence="1">
    <location>
        <begin position="253"/>
        <end position="273"/>
    </location>
</feature>
<feature type="transmembrane region" description="Helical" evidence="1">
    <location>
        <begin position="302"/>
        <end position="322"/>
    </location>
</feature>
<organism>
    <name type="scientific">Bacillus cereus (strain ATCC 10987 / NRS 248)</name>
    <dbReference type="NCBI Taxonomy" id="222523"/>
    <lineage>
        <taxon>Bacteria</taxon>
        <taxon>Bacillati</taxon>
        <taxon>Bacillota</taxon>
        <taxon>Bacilli</taxon>
        <taxon>Bacillales</taxon>
        <taxon>Bacillaceae</taxon>
        <taxon>Bacillus</taxon>
        <taxon>Bacillus cereus group</taxon>
    </lineage>
</organism>
<gene>
    <name evidence="1" type="primary">mraY</name>
    <name type="ordered locus">BCE_3959</name>
</gene>
<protein>
    <recommendedName>
        <fullName evidence="1">Phospho-N-acetylmuramoyl-pentapeptide-transferase</fullName>
        <ecNumber evidence="1">2.7.8.13</ecNumber>
    </recommendedName>
    <alternativeName>
        <fullName evidence="1">UDP-MurNAc-pentapeptide phosphotransferase</fullName>
    </alternativeName>
</protein>
<accession>Q732F5</accession>
<name>MRAY_BACC1</name>
<comment type="function">
    <text evidence="1">Catalyzes the initial step of the lipid cycle reactions in the biosynthesis of the cell wall peptidoglycan: transfers peptidoglycan precursor phospho-MurNAc-pentapeptide from UDP-MurNAc-pentapeptide onto the lipid carrier undecaprenyl phosphate, yielding undecaprenyl-pyrophosphoryl-MurNAc-pentapeptide, known as lipid I.</text>
</comment>
<comment type="catalytic activity">
    <reaction evidence="1">
        <text>UDP-N-acetyl-alpha-D-muramoyl-L-alanyl-gamma-D-glutamyl-meso-2,6-diaminopimeloyl-D-alanyl-D-alanine + di-trans,octa-cis-undecaprenyl phosphate = di-trans,octa-cis-undecaprenyl diphospho-N-acetyl-alpha-D-muramoyl-L-alanyl-D-glutamyl-meso-2,6-diaminopimeloyl-D-alanyl-D-alanine + UMP</text>
        <dbReference type="Rhea" id="RHEA:28386"/>
        <dbReference type="ChEBI" id="CHEBI:57865"/>
        <dbReference type="ChEBI" id="CHEBI:60392"/>
        <dbReference type="ChEBI" id="CHEBI:61386"/>
        <dbReference type="ChEBI" id="CHEBI:61387"/>
        <dbReference type="EC" id="2.7.8.13"/>
    </reaction>
</comment>
<comment type="cofactor">
    <cofactor evidence="1">
        <name>Mg(2+)</name>
        <dbReference type="ChEBI" id="CHEBI:18420"/>
    </cofactor>
</comment>
<comment type="pathway">
    <text evidence="1">Cell wall biogenesis; peptidoglycan biosynthesis.</text>
</comment>
<comment type="subcellular location">
    <subcellularLocation>
        <location evidence="1">Cell membrane</location>
        <topology evidence="1">Multi-pass membrane protein</topology>
    </subcellularLocation>
</comment>
<comment type="similarity">
    <text evidence="1">Belongs to the glycosyltransferase 4 family. MraY subfamily.</text>
</comment>